<reference key="1">
    <citation type="submission" date="2007-06" db="EMBL/GenBank/DDBJ databases">
        <title>Complete sequence of Marinomonas sp. MWYL1.</title>
        <authorList>
            <consortium name="US DOE Joint Genome Institute"/>
            <person name="Copeland A."/>
            <person name="Lucas S."/>
            <person name="Lapidus A."/>
            <person name="Barry K."/>
            <person name="Glavina del Rio T."/>
            <person name="Dalin E."/>
            <person name="Tice H."/>
            <person name="Pitluck S."/>
            <person name="Kiss H."/>
            <person name="Brettin T."/>
            <person name="Bruce D."/>
            <person name="Detter J.C."/>
            <person name="Han C."/>
            <person name="Schmutz J."/>
            <person name="Larimer F."/>
            <person name="Land M."/>
            <person name="Hauser L."/>
            <person name="Kyrpides N."/>
            <person name="Kim E."/>
            <person name="Johnston A.W.B."/>
            <person name="Todd J.D."/>
            <person name="Rogers R."/>
            <person name="Wexler M."/>
            <person name="Bond P.L."/>
            <person name="Li Y."/>
            <person name="Richardson P."/>
        </authorList>
    </citation>
    <scope>NUCLEOTIDE SEQUENCE [LARGE SCALE GENOMIC DNA]</scope>
    <source>
        <strain>MWYL1</strain>
    </source>
</reference>
<comment type="function">
    <text evidence="1">NQR complex catalyzes the reduction of ubiquinone-1 to ubiquinol by two successive reactions, coupled with the transport of Na(+) ions from the cytoplasm to the periplasm. NqrA to NqrE are probably involved in the second step, the conversion of ubisemiquinone to ubiquinol.</text>
</comment>
<comment type="catalytic activity">
    <reaction evidence="1">
        <text>a ubiquinone + n Na(+)(in) + NADH + H(+) = a ubiquinol + n Na(+)(out) + NAD(+)</text>
        <dbReference type="Rhea" id="RHEA:47748"/>
        <dbReference type="Rhea" id="RHEA-COMP:9565"/>
        <dbReference type="Rhea" id="RHEA-COMP:9566"/>
        <dbReference type="ChEBI" id="CHEBI:15378"/>
        <dbReference type="ChEBI" id="CHEBI:16389"/>
        <dbReference type="ChEBI" id="CHEBI:17976"/>
        <dbReference type="ChEBI" id="CHEBI:29101"/>
        <dbReference type="ChEBI" id="CHEBI:57540"/>
        <dbReference type="ChEBI" id="CHEBI:57945"/>
        <dbReference type="EC" id="7.2.1.1"/>
    </reaction>
</comment>
<comment type="subunit">
    <text evidence="1">Composed of six subunits; NqrA, NqrB, NqrC, NqrD, NqrE and NqrF.</text>
</comment>
<comment type="similarity">
    <text evidence="1">Belongs to the NqrA family.</text>
</comment>
<feature type="chain" id="PRO_1000080565" description="Na(+)-translocating NADH-quinone reductase subunit A">
    <location>
        <begin position="1"/>
        <end position="445"/>
    </location>
</feature>
<name>NQRA_MARMS</name>
<accession>A6VW08</accession>
<keyword id="KW-0406">Ion transport</keyword>
<keyword id="KW-0520">NAD</keyword>
<keyword id="KW-0915">Sodium</keyword>
<keyword id="KW-0739">Sodium transport</keyword>
<keyword id="KW-1278">Translocase</keyword>
<keyword id="KW-0813">Transport</keyword>
<keyword id="KW-0830">Ubiquinone</keyword>
<sequence length="445" mass="48382">MYKITKGLDLPISGAPNQVIETAAAAKTVAVIGPDFHGMKPTMLVKEGDKVKKGQIIFTDKKTEGVNYTAPASGTVIEINRGERRVFQSLVIRVEGDESETFTSYSGSELKSLERSKVVDNLVNSGLWTSFRTRPFSKVPEIASVPNSIFVTAIDTNPLAASPEVVLADQAEAFADGLTVLTRLTEGKVFLCKASGAKIPTTSDVTVEEFSGVHPAGLAGTHIHFLDPVNDKKTVWSINYQDVVAIGKLFVTGELSVERVISVAGPQVKKPRLVRTQVGVSLNDLLAGELSEGDNRVISGSVLSGRKAFGPFAYLGRYHNQVSVLLEGRERQMMHYLRAGVEKHSIMNVFLSKLTGKKSFDMTTTTNGSDRTMLPLGNFERVMPLDILPTQLLRALVVNDTEQAQKLGALELDDEDLALCTYSCSGKFEYGPILRDCLTLIEKEG</sequence>
<gene>
    <name evidence="1" type="primary">nqrA</name>
    <name type="ordered locus">Mmwyl1_1711</name>
</gene>
<organism>
    <name type="scientific">Marinomonas sp. (strain MWYL1)</name>
    <dbReference type="NCBI Taxonomy" id="400668"/>
    <lineage>
        <taxon>Bacteria</taxon>
        <taxon>Pseudomonadati</taxon>
        <taxon>Pseudomonadota</taxon>
        <taxon>Gammaproteobacteria</taxon>
        <taxon>Oceanospirillales</taxon>
        <taxon>Oceanospirillaceae</taxon>
        <taxon>Marinomonas</taxon>
    </lineage>
</organism>
<protein>
    <recommendedName>
        <fullName evidence="1">Na(+)-translocating NADH-quinone reductase subunit A</fullName>
        <shortName evidence="1">Na(+)-NQR subunit A</shortName>
        <shortName evidence="1">Na(+)-translocating NQR subunit A</shortName>
        <ecNumber evidence="1">7.2.1.1</ecNumber>
    </recommendedName>
    <alternativeName>
        <fullName evidence="1">NQR complex subunit A</fullName>
    </alternativeName>
    <alternativeName>
        <fullName evidence="1">NQR-1 subunit A</fullName>
    </alternativeName>
</protein>
<dbReference type="EC" id="7.2.1.1" evidence="1"/>
<dbReference type="EMBL" id="CP000749">
    <property type="protein sequence ID" value="ABR70637.1"/>
    <property type="molecule type" value="Genomic_DNA"/>
</dbReference>
<dbReference type="SMR" id="A6VW08"/>
<dbReference type="STRING" id="400668.Mmwyl1_1711"/>
<dbReference type="KEGG" id="mmw:Mmwyl1_1711"/>
<dbReference type="eggNOG" id="COG1726">
    <property type="taxonomic scope" value="Bacteria"/>
</dbReference>
<dbReference type="HOGENOM" id="CLU_046656_0_0_6"/>
<dbReference type="OrthoDB" id="9774536at2"/>
<dbReference type="GO" id="GO:0016655">
    <property type="term" value="F:oxidoreductase activity, acting on NAD(P)H, quinone or similar compound as acceptor"/>
    <property type="evidence" value="ECO:0007669"/>
    <property type="project" value="UniProtKB-UniRule"/>
</dbReference>
<dbReference type="GO" id="GO:0006814">
    <property type="term" value="P:sodium ion transport"/>
    <property type="evidence" value="ECO:0007669"/>
    <property type="project" value="UniProtKB-UniRule"/>
</dbReference>
<dbReference type="CDD" id="cd06849">
    <property type="entry name" value="lipoyl_domain"/>
    <property type="match status" value="1"/>
</dbReference>
<dbReference type="Gene3D" id="2.40.50.100">
    <property type="match status" value="1"/>
</dbReference>
<dbReference type="HAMAP" id="MF_00425">
    <property type="entry name" value="NqrA"/>
    <property type="match status" value="1"/>
</dbReference>
<dbReference type="InterPro" id="IPR008703">
    <property type="entry name" value="NqrA"/>
</dbReference>
<dbReference type="InterPro" id="IPR056148">
    <property type="entry name" value="NQRA_2nd"/>
</dbReference>
<dbReference type="InterPro" id="IPR022615">
    <property type="entry name" value="NqrA_C_domain"/>
</dbReference>
<dbReference type="InterPro" id="IPR056147">
    <property type="entry name" value="NQRA_N"/>
</dbReference>
<dbReference type="InterPro" id="IPR011053">
    <property type="entry name" value="Single_hybrid_motif"/>
</dbReference>
<dbReference type="NCBIfam" id="TIGR01936">
    <property type="entry name" value="nqrA"/>
    <property type="match status" value="1"/>
</dbReference>
<dbReference type="NCBIfam" id="NF003759">
    <property type="entry name" value="PRK05352.1-2"/>
    <property type="match status" value="1"/>
</dbReference>
<dbReference type="PANTHER" id="PTHR37839">
    <property type="entry name" value="NA(+)-TRANSLOCATING NADH-QUINONE REDUCTASE SUBUNIT A"/>
    <property type="match status" value="1"/>
</dbReference>
<dbReference type="PANTHER" id="PTHR37839:SF1">
    <property type="entry name" value="NA(+)-TRANSLOCATING NADH-QUINONE REDUCTASE SUBUNIT A"/>
    <property type="match status" value="1"/>
</dbReference>
<dbReference type="Pfam" id="PF24836">
    <property type="entry name" value="NQRA_2nd"/>
    <property type="match status" value="1"/>
</dbReference>
<dbReference type="Pfam" id="PF05896">
    <property type="entry name" value="NQRA_N"/>
    <property type="match status" value="1"/>
</dbReference>
<dbReference type="Pfam" id="PF11973">
    <property type="entry name" value="NQRA_SLBB"/>
    <property type="match status" value="1"/>
</dbReference>
<dbReference type="SUPFAM" id="SSF51230">
    <property type="entry name" value="Single hybrid motif"/>
    <property type="match status" value="1"/>
</dbReference>
<evidence type="ECO:0000255" key="1">
    <source>
        <dbReference type="HAMAP-Rule" id="MF_00425"/>
    </source>
</evidence>
<proteinExistence type="inferred from homology"/>